<name>RL11_HAEIG</name>
<feature type="chain" id="PRO_1000046187" description="Large ribosomal subunit protein uL11">
    <location>
        <begin position="1"/>
        <end position="142"/>
    </location>
</feature>
<dbReference type="EMBL" id="CP000672">
    <property type="protein sequence ID" value="ABR00078.1"/>
    <property type="molecule type" value="Genomic_DNA"/>
</dbReference>
<dbReference type="SMR" id="A5UH22"/>
<dbReference type="KEGG" id="hiq:CGSHiGG_05835"/>
<dbReference type="HOGENOM" id="CLU_074237_2_0_6"/>
<dbReference type="Proteomes" id="UP000001990">
    <property type="component" value="Chromosome"/>
</dbReference>
<dbReference type="GO" id="GO:0022625">
    <property type="term" value="C:cytosolic large ribosomal subunit"/>
    <property type="evidence" value="ECO:0007669"/>
    <property type="project" value="TreeGrafter"/>
</dbReference>
<dbReference type="GO" id="GO:0070180">
    <property type="term" value="F:large ribosomal subunit rRNA binding"/>
    <property type="evidence" value="ECO:0007669"/>
    <property type="project" value="UniProtKB-UniRule"/>
</dbReference>
<dbReference type="GO" id="GO:0003735">
    <property type="term" value="F:structural constituent of ribosome"/>
    <property type="evidence" value="ECO:0007669"/>
    <property type="project" value="InterPro"/>
</dbReference>
<dbReference type="GO" id="GO:0006412">
    <property type="term" value="P:translation"/>
    <property type="evidence" value="ECO:0007669"/>
    <property type="project" value="UniProtKB-UniRule"/>
</dbReference>
<dbReference type="CDD" id="cd00349">
    <property type="entry name" value="Ribosomal_L11"/>
    <property type="match status" value="1"/>
</dbReference>
<dbReference type="FunFam" id="1.10.10.250:FF:000001">
    <property type="entry name" value="50S ribosomal protein L11"/>
    <property type="match status" value="1"/>
</dbReference>
<dbReference type="FunFam" id="3.30.1550.10:FF:000001">
    <property type="entry name" value="50S ribosomal protein L11"/>
    <property type="match status" value="1"/>
</dbReference>
<dbReference type="Gene3D" id="1.10.10.250">
    <property type="entry name" value="Ribosomal protein L11, C-terminal domain"/>
    <property type="match status" value="1"/>
</dbReference>
<dbReference type="Gene3D" id="3.30.1550.10">
    <property type="entry name" value="Ribosomal protein L11/L12, N-terminal domain"/>
    <property type="match status" value="1"/>
</dbReference>
<dbReference type="HAMAP" id="MF_00736">
    <property type="entry name" value="Ribosomal_uL11"/>
    <property type="match status" value="1"/>
</dbReference>
<dbReference type="InterPro" id="IPR000911">
    <property type="entry name" value="Ribosomal_uL11"/>
</dbReference>
<dbReference type="InterPro" id="IPR006519">
    <property type="entry name" value="Ribosomal_uL11_bac-typ"/>
</dbReference>
<dbReference type="InterPro" id="IPR020783">
    <property type="entry name" value="Ribosomal_uL11_C"/>
</dbReference>
<dbReference type="InterPro" id="IPR036769">
    <property type="entry name" value="Ribosomal_uL11_C_sf"/>
</dbReference>
<dbReference type="InterPro" id="IPR020784">
    <property type="entry name" value="Ribosomal_uL11_N"/>
</dbReference>
<dbReference type="InterPro" id="IPR036796">
    <property type="entry name" value="Ribosomal_uL11_N_sf"/>
</dbReference>
<dbReference type="NCBIfam" id="TIGR01632">
    <property type="entry name" value="L11_bact"/>
    <property type="match status" value="1"/>
</dbReference>
<dbReference type="PANTHER" id="PTHR11661">
    <property type="entry name" value="60S RIBOSOMAL PROTEIN L12"/>
    <property type="match status" value="1"/>
</dbReference>
<dbReference type="PANTHER" id="PTHR11661:SF1">
    <property type="entry name" value="LARGE RIBOSOMAL SUBUNIT PROTEIN UL11M"/>
    <property type="match status" value="1"/>
</dbReference>
<dbReference type="Pfam" id="PF00298">
    <property type="entry name" value="Ribosomal_L11"/>
    <property type="match status" value="1"/>
</dbReference>
<dbReference type="Pfam" id="PF03946">
    <property type="entry name" value="Ribosomal_L11_N"/>
    <property type="match status" value="1"/>
</dbReference>
<dbReference type="SMART" id="SM00649">
    <property type="entry name" value="RL11"/>
    <property type="match status" value="1"/>
</dbReference>
<dbReference type="SUPFAM" id="SSF54747">
    <property type="entry name" value="Ribosomal L11/L12e N-terminal domain"/>
    <property type="match status" value="1"/>
</dbReference>
<dbReference type="SUPFAM" id="SSF46906">
    <property type="entry name" value="Ribosomal protein L11, C-terminal domain"/>
    <property type="match status" value="1"/>
</dbReference>
<dbReference type="PROSITE" id="PS00359">
    <property type="entry name" value="RIBOSOMAL_L11"/>
    <property type="match status" value="1"/>
</dbReference>
<keyword id="KW-0488">Methylation</keyword>
<keyword id="KW-0687">Ribonucleoprotein</keyword>
<keyword id="KW-0689">Ribosomal protein</keyword>
<keyword id="KW-0694">RNA-binding</keyword>
<keyword id="KW-0699">rRNA-binding</keyword>
<organism>
    <name type="scientific">Haemophilus influenzae (strain PittGG)</name>
    <dbReference type="NCBI Taxonomy" id="374931"/>
    <lineage>
        <taxon>Bacteria</taxon>
        <taxon>Pseudomonadati</taxon>
        <taxon>Pseudomonadota</taxon>
        <taxon>Gammaproteobacteria</taxon>
        <taxon>Pasteurellales</taxon>
        <taxon>Pasteurellaceae</taxon>
        <taxon>Haemophilus</taxon>
    </lineage>
</organism>
<accession>A5UH22</accession>
<reference key="1">
    <citation type="journal article" date="2007" name="Genome Biol.">
        <title>Characterization and modeling of the Haemophilus influenzae core and supragenomes based on the complete genomic sequences of Rd and 12 clinical nontypeable strains.</title>
        <authorList>
            <person name="Hogg J.S."/>
            <person name="Hu F.Z."/>
            <person name="Janto B."/>
            <person name="Boissy R."/>
            <person name="Hayes J."/>
            <person name="Keefe R."/>
            <person name="Post J.C."/>
            <person name="Ehrlich G.D."/>
        </authorList>
    </citation>
    <scope>NUCLEOTIDE SEQUENCE [LARGE SCALE GENOMIC DNA]</scope>
    <source>
        <strain>PittGG</strain>
    </source>
</reference>
<sequence>MAKKVQAYVKLQVAAGMANPSPPVGPALGQQGVNIMEFCKAFNARTESLEKGLPIPVVITVYADRSFTFVTKTPPAAVLLKKAAGIKSGSGKPNKDKVGKVTLDQVRQIAETKAADMTGASIETKMKSIAGTARSMGLVVEE</sequence>
<comment type="function">
    <text evidence="1">Forms part of the ribosomal stalk which helps the ribosome interact with GTP-bound translation factors.</text>
</comment>
<comment type="subunit">
    <text evidence="1">Part of the ribosomal stalk of the 50S ribosomal subunit. Interacts with L10 and the large rRNA to form the base of the stalk. L10 forms an elongated spine to which L12 dimers bind in a sequential fashion forming a multimeric L10(L12)X complex.</text>
</comment>
<comment type="PTM">
    <text evidence="1">One or more lysine residues are methylated.</text>
</comment>
<comment type="similarity">
    <text evidence="1">Belongs to the universal ribosomal protein uL11 family.</text>
</comment>
<protein>
    <recommendedName>
        <fullName evidence="1">Large ribosomal subunit protein uL11</fullName>
    </recommendedName>
    <alternativeName>
        <fullName evidence="2">50S ribosomal protein L11</fullName>
    </alternativeName>
</protein>
<proteinExistence type="inferred from homology"/>
<gene>
    <name evidence="1" type="primary">rplK</name>
    <name type="ordered locus">CGSHiGG_05835</name>
</gene>
<evidence type="ECO:0000255" key="1">
    <source>
        <dbReference type="HAMAP-Rule" id="MF_00736"/>
    </source>
</evidence>
<evidence type="ECO:0000305" key="2"/>